<reference key="1">
    <citation type="journal article" date="2004" name="Nat. Biotechnol.">
        <title>Complete genome sequence of the metabolically versatile photosynthetic bacterium Rhodopseudomonas palustris.</title>
        <authorList>
            <person name="Larimer F.W."/>
            <person name="Chain P."/>
            <person name="Hauser L."/>
            <person name="Lamerdin J.E."/>
            <person name="Malfatti S."/>
            <person name="Do L."/>
            <person name="Land M.L."/>
            <person name="Pelletier D.A."/>
            <person name="Beatty J.T."/>
            <person name="Lang A.S."/>
            <person name="Tabita F.R."/>
            <person name="Gibson J.L."/>
            <person name="Hanson T.E."/>
            <person name="Bobst C."/>
            <person name="Torres y Torres J.L."/>
            <person name="Peres C."/>
            <person name="Harrison F.H."/>
            <person name="Gibson J."/>
            <person name="Harwood C.S."/>
        </authorList>
    </citation>
    <scope>NUCLEOTIDE SEQUENCE [LARGE SCALE GENOMIC DNA]</scope>
    <source>
        <strain>ATCC BAA-98 / CGA009</strain>
    </source>
</reference>
<comment type="function">
    <text evidence="1">May be involved in sulfur metabolism and oxidative stress response. Does not show RuBisCO activity (By similarity).</text>
</comment>
<comment type="cofactor">
    <cofactor evidence="1">
        <name>Mg(2+)</name>
        <dbReference type="ChEBI" id="CHEBI:18420"/>
    </cofactor>
    <text evidence="1">Binds 1 Mg(2+) ion per subunit.</text>
</comment>
<comment type="subunit">
    <text>Homodimer.</text>
</comment>
<comment type="similarity">
    <text evidence="3">Belongs to the RuBisCO large chain family. Type IV subfamily.</text>
</comment>
<dbReference type="EMBL" id="BX572593">
    <property type="protein sequence ID" value="CAE25706.1"/>
    <property type="molecule type" value="Genomic_DNA"/>
</dbReference>
<dbReference type="RefSeq" id="WP_011155830.1">
    <property type="nucleotide sequence ID" value="NZ_CP116810.1"/>
</dbReference>
<dbReference type="PDB" id="2QYG">
    <property type="method" value="X-ray"/>
    <property type="resolution" value="3.30 A"/>
    <property type="chains" value="A/B/C/D=1-432"/>
</dbReference>
<dbReference type="PDBsum" id="2QYG"/>
<dbReference type="SMR" id="Q6ND47"/>
<dbReference type="STRING" id="258594.RPA0262"/>
<dbReference type="GeneID" id="66891271"/>
<dbReference type="eggNOG" id="COG1850">
    <property type="taxonomic scope" value="Bacteria"/>
</dbReference>
<dbReference type="HOGENOM" id="CLU_031450_3_0_5"/>
<dbReference type="PhylomeDB" id="Q6ND47"/>
<dbReference type="EvolutionaryTrace" id="Q6ND47"/>
<dbReference type="GO" id="GO:0000287">
    <property type="term" value="F:magnesium ion binding"/>
    <property type="evidence" value="ECO:0007669"/>
    <property type="project" value="InterPro"/>
</dbReference>
<dbReference type="GO" id="GO:0016984">
    <property type="term" value="F:ribulose-bisphosphate carboxylase activity"/>
    <property type="evidence" value="ECO:0007669"/>
    <property type="project" value="InterPro"/>
</dbReference>
<dbReference type="GO" id="GO:0015977">
    <property type="term" value="P:carbon fixation"/>
    <property type="evidence" value="ECO:0007669"/>
    <property type="project" value="InterPro"/>
</dbReference>
<dbReference type="CDD" id="cd08208">
    <property type="entry name" value="RLP_Photo"/>
    <property type="match status" value="1"/>
</dbReference>
<dbReference type="Gene3D" id="3.20.20.110">
    <property type="entry name" value="Ribulose bisphosphate carboxylase, large subunit, C-terminal domain"/>
    <property type="match status" value="1"/>
</dbReference>
<dbReference type="Gene3D" id="3.30.70.150">
    <property type="entry name" value="RuBisCO large subunit, N-terminal domain"/>
    <property type="match status" value="1"/>
</dbReference>
<dbReference type="InterPro" id="IPR033966">
    <property type="entry name" value="RuBisCO"/>
</dbReference>
<dbReference type="InterPro" id="IPR000685">
    <property type="entry name" value="RuBisCO_lsu_C"/>
</dbReference>
<dbReference type="InterPro" id="IPR036376">
    <property type="entry name" value="RuBisCO_lsu_C_sf"/>
</dbReference>
<dbReference type="InterPro" id="IPR017443">
    <property type="entry name" value="RuBisCO_lsu_fd_N"/>
</dbReference>
<dbReference type="InterPro" id="IPR036422">
    <property type="entry name" value="RuBisCO_lsu_N_sf"/>
</dbReference>
<dbReference type="PANTHER" id="PTHR42704">
    <property type="entry name" value="RIBULOSE BISPHOSPHATE CARBOXYLASE"/>
    <property type="match status" value="1"/>
</dbReference>
<dbReference type="PANTHER" id="PTHR42704:SF17">
    <property type="entry name" value="RIBULOSE BISPHOSPHATE CARBOXYLASE LARGE CHAIN"/>
    <property type="match status" value="1"/>
</dbReference>
<dbReference type="Pfam" id="PF00016">
    <property type="entry name" value="RuBisCO_large"/>
    <property type="match status" value="1"/>
</dbReference>
<dbReference type="Pfam" id="PF02788">
    <property type="entry name" value="RuBisCO_large_N"/>
    <property type="match status" value="1"/>
</dbReference>
<dbReference type="SFLD" id="SFLDS00014">
    <property type="entry name" value="RuBisCO"/>
    <property type="match status" value="1"/>
</dbReference>
<dbReference type="SFLD" id="SFLDG00301">
    <property type="entry name" value="RuBisCO-like_proteins"/>
    <property type="match status" value="1"/>
</dbReference>
<dbReference type="SUPFAM" id="SSF51649">
    <property type="entry name" value="RuBisCo, C-terminal domain"/>
    <property type="match status" value="1"/>
</dbReference>
<dbReference type="SUPFAM" id="SSF54966">
    <property type="entry name" value="RuBisCO, large subunit, small (N-terminal) domain"/>
    <property type="match status" value="1"/>
</dbReference>
<evidence type="ECO:0000250" key="1"/>
<evidence type="ECO:0000255" key="2"/>
<evidence type="ECO:0000305" key="3"/>
<evidence type="ECO:0007829" key="4">
    <source>
        <dbReference type="PDB" id="2QYG"/>
    </source>
</evidence>
<name>RBLL2_RHOPA</name>
<organism>
    <name type="scientific">Rhodopseudomonas palustris (strain ATCC BAA-98 / CGA009)</name>
    <dbReference type="NCBI Taxonomy" id="258594"/>
    <lineage>
        <taxon>Bacteria</taxon>
        <taxon>Pseudomonadati</taxon>
        <taxon>Pseudomonadota</taxon>
        <taxon>Alphaproteobacteria</taxon>
        <taxon>Hyphomicrobiales</taxon>
        <taxon>Nitrobacteraceae</taxon>
        <taxon>Rhodopseudomonas</taxon>
    </lineage>
</organism>
<protein>
    <recommendedName>
        <fullName>Ribulose bisphosphate carboxylase-like protein 2</fullName>
        <shortName>RuBisCO-like protein</shortName>
    </recommendedName>
</protein>
<proteinExistence type="evidence at protein level"/>
<keyword id="KW-0002">3D-structure</keyword>
<keyword id="KW-0460">Magnesium</keyword>
<keyword id="KW-0479">Metal-binding</keyword>
<gene>
    <name type="primary">rlp2</name>
    <name type="ordered locus">RPA0262</name>
</gene>
<sequence>MTPDDIAGFYAKRADLDLDNYIELDFDFECAGDPHEAAAHLCSEQSTAQWRRVGFDEDFRPRFAAKVLELSAEPRPSGFSVPVECAARGPVHACRVTIAHPHGNFGAKIPNLLSAVCGEGVFFSPGIPLIRLQDIRFPEPYLAAFDGPRFGIAGVRERLQAFDRPIFFGVIKPNIGLPPQPFAELGYQSWTGGLDIAKDDEMLADVDWCPLAERAALLGDACRRASAETGVPKIYLANITDEVDRLTELHDVAVANGAGALLINAMPVGLSAVRMLRKHATVPLIAHFPFIAAFSRLANYGIHSRVMTRLQRLAGFDVVIMPGFGPRMMTPEHEVLDCIRACLEPMGPIKPCLPVPGGSDSAATLENVYRKVGSADFGFVPGRGVFGHPMGPAAGATSIRQAWDAIAAGIPVPDHAASHPELAAALRAFGGR</sequence>
<accession>Q6ND47</accession>
<feature type="chain" id="PRO_0000062683" description="Ribulose bisphosphate carboxylase-like protein 2">
    <location>
        <begin position="1"/>
        <end position="432"/>
    </location>
</feature>
<feature type="binding site" description="via carbamate group" evidence="2">
    <location>
        <position position="198"/>
    </location>
    <ligand>
        <name>Mg(2+)</name>
        <dbReference type="ChEBI" id="CHEBI:18420"/>
    </ligand>
</feature>
<feature type="binding site" evidence="1">
    <location>
        <position position="200"/>
    </location>
    <ligand>
        <name>Mg(2+)</name>
        <dbReference type="ChEBI" id="CHEBI:18420"/>
    </ligand>
</feature>
<feature type="binding site" evidence="1">
    <location>
        <position position="201"/>
    </location>
    <ligand>
        <name>Mg(2+)</name>
        <dbReference type="ChEBI" id="CHEBI:18420"/>
    </ligand>
</feature>
<feature type="modified residue" description="N6-carboxylysine" evidence="2">
    <location>
        <position position="198"/>
    </location>
</feature>
<feature type="helix" evidence="4">
    <location>
        <begin position="4"/>
        <end position="9"/>
    </location>
</feature>
<feature type="helix" evidence="4">
    <location>
        <begin position="13"/>
        <end position="15"/>
    </location>
</feature>
<feature type="helix" evidence="4">
    <location>
        <begin position="18"/>
        <end position="20"/>
    </location>
</feature>
<feature type="strand" evidence="4">
    <location>
        <begin position="21"/>
        <end position="32"/>
    </location>
</feature>
<feature type="helix" evidence="4">
    <location>
        <begin position="34"/>
        <end position="45"/>
    </location>
</feature>
<feature type="helix" evidence="4">
    <location>
        <begin position="60"/>
        <end position="63"/>
    </location>
</feature>
<feature type="strand" evidence="4">
    <location>
        <begin position="66"/>
        <end position="74"/>
    </location>
</feature>
<feature type="strand" evidence="4">
    <location>
        <begin position="91"/>
        <end position="101"/>
    </location>
</feature>
<feature type="helix" evidence="4">
    <location>
        <begin position="102"/>
        <end position="104"/>
    </location>
</feature>
<feature type="helix" evidence="4">
    <location>
        <begin position="109"/>
        <end position="116"/>
    </location>
</feature>
<feature type="helix" evidence="4">
    <location>
        <begin position="119"/>
        <end position="122"/>
    </location>
</feature>
<feature type="strand" evidence="4">
    <location>
        <begin position="129"/>
        <end position="136"/>
    </location>
</feature>
<feature type="helix" evidence="4">
    <location>
        <begin position="139"/>
        <end position="142"/>
    </location>
</feature>
<feature type="helix" evidence="4">
    <location>
        <begin position="151"/>
        <end position="159"/>
    </location>
</feature>
<feature type="strand" evidence="4">
    <location>
        <begin position="166"/>
        <end position="170"/>
    </location>
</feature>
<feature type="helix" evidence="4">
    <location>
        <begin position="180"/>
        <end position="192"/>
    </location>
</feature>
<feature type="strand" evidence="4">
    <location>
        <begin position="195"/>
        <end position="198"/>
    </location>
</feature>
<feature type="helix" evidence="4">
    <location>
        <begin position="211"/>
        <end position="229"/>
    </location>
</feature>
<feature type="strand" evidence="4">
    <location>
        <begin position="234"/>
        <end position="238"/>
    </location>
</feature>
<feature type="helix" evidence="4">
    <location>
        <begin position="245"/>
        <end position="255"/>
    </location>
</feature>
<feature type="strand" evidence="4">
    <location>
        <begin position="260"/>
        <end position="264"/>
    </location>
</feature>
<feature type="helix" evidence="4">
    <location>
        <begin position="265"/>
        <end position="268"/>
    </location>
</feature>
<feature type="helix" evidence="4">
    <location>
        <begin position="270"/>
        <end position="277"/>
    </location>
</feature>
<feature type="strand" evidence="4">
    <location>
        <begin position="284"/>
        <end position="287"/>
    </location>
</feature>
<feature type="helix" evidence="4">
    <location>
        <begin position="291"/>
        <end position="295"/>
    </location>
</feature>
<feature type="strand" evidence="4">
    <location>
        <begin position="300"/>
        <end position="302"/>
    </location>
</feature>
<feature type="helix" evidence="4">
    <location>
        <begin position="304"/>
        <end position="314"/>
    </location>
</feature>
<feature type="strand" evidence="4">
    <location>
        <begin position="317"/>
        <end position="321"/>
    </location>
</feature>
<feature type="helix" evidence="4">
    <location>
        <begin position="326"/>
        <end position="328"/>
    </location>
</feature>
<feature type="helix" evidence="4">
    <location>
        <begin position="332"/>
        <end position="343"/>
    </location>
</feature>
<feature type="strand" evidence="4">
    <location>
        <begin position="353"/>
        <end position="356"/>
    </location>
</feature>
<feature type="turn" evidence="4">
    <location>
        <begin position="362"/>
        <end position="364"/>
    </location>
</feature>
<feature type="helix" evidence="4">
    <location>
        <begin position="365"/>
        <end position="372"/>
    </location>
</feature>
<feature type="turn" evidence="4">
    <location>
        <begin position="383"/>
        <end position="387"/>
    </location>
</feature>
<feature type="helix" evidence="4">
    <location>
        <begin position="392"/>
        <end position="407"/>
    </location>
</feature>
<feature type="helix" evidence="4">
    <location>
        <begin position="412"/>
        <end position="416"/>
    </location>
</feature>
<feature type="helix" evidence="4">
    <location>
        <begin position="420"/>
        <end position="428"/>
    </location>
</feature>